<protein>
    <recommendedName>
        <fullName>26S proteasome non-ATPase regulatory subunit 8 homolog A</fullName>
    </recommendedName>
    <alternativeName>
        <fullName evidence="11">26S proteasome regulatory subunit RPN12a</fullName>
        <shortName evidence="11">AtRPN12a</shortName>
    </alternativeName>
    <alternativeName>
        <fullName>26S proteasome regulatory subunit S14 homolog A</fullName>
    </alternativeName>
</protein>
<accession>Q9SGW3</accession>
<accession>Q6XJF4</accession>
<organism>
    <name type="scientific">Arabidopsis thaliana</name>
    <name type="common">Mouse-ear cress</name>
    <dbReference type="NCBI Taxonomy" id="3702"/>
    <lineage>
        <taxon>Eukaryota</taxon>
        <taxon>Viridiplantae</taxon>
        <taxon>Streptophyta</taxon>
        <taxon>Embryophyta</taxon>
        <taxon>Tracheophyta</taxon>
        <taxon>Spermatophyta</taxon>
        <taxon>Magnoliopsida</taxon>
        <taxon>eudicotyledons</taxon>
        <taxon>Gunneridae</taxon>
        <taxon>Pentapetalae</taxon>
        <taxon>rosids</taxon>
        <taxon>malvids</taxon>
        <taxon>Brassicales</taxon>
        <taxon>Brassicaceae</taxon>
        <taxon>Camelineae</taxon>
        <taxon>Arabidopsis</taxon>
    </lineage>
</organism>
<dbReference type="EMBL" id="AY230846">
    <property type="protein sequence ID" value="AAP86673.1"/>
    <property type="molecule type" value="mRNA"/>
</dbReference>
<dbReference type="EMBL" id="AY230847">
    <property type="protein sequence ID" value="AAP86674.1"/>
    <property type="molecule type" value="mRNA"/>
</dbReference>
<dbReference type="EMBL" id="AC009519">
    <property type="protein sequence ID" value="AAF19671.1"/>
    <property type="molecule type" value="Genomic_DNA"/>
</dbReference>
<dbReference type="EMBL" id="CP002684">
    <property type="protein sequence ID" value="AEE34249.1"/>
    <property type="molecule type" value="Genomic_DNA"/>
</dbReference>
<dbReference type="EMBL" id="AF410265">
    <property type="protein sequence ID" value="AAK95251.1"/>
    <property type="molecule type" value="mRNA"/>
</dbReference>
<dbReference type="EMBL" id="AY039857">
    <property type="protein sequence ID" value="AAK63961.1"/>
    <property type="molecule type" value="mRNA"/>
</dbReference>
<dbReference type="EMBL" id="AY143888">
    <property type="protein sequence ID" value="AAN28827.1"/>
    <property type="molecule type" value="mRNA"/>
</dbReference>
<dbReference type="PIR" id="H96668">
    <property type="entry name" value="H96668"/>
</dbReference>
<dbReference type="RefSeq" id="NP_176633.1">
    <property type="nucleotide sequence ID" value="NM_105127.4"/>
</dbReference>
<dbReference type="SMR" id="Q9SGW3"/>
<dbReference type="BioGRID" id="27981">
    <property type="interactions" value="104"/>
</dbReference>
<dbReference type="FunCoup" id="Q9SGW3">
    <property type="interactions" value="4593"/>
</dbReference>
<dbReference type="IntAct" id="Q9SGW3">
    <property type="interactions" value="8"/>
</dbReference>
<dbReference type="STRING" id="3702.Q9SGW3"/>
<dbReference type="iPTMnet" id="Q9SGW3"/>
<dbReference type="SwissPalm" id="Q9SGW3"/>
<dbReference type="PaxDb" id="3702-AT1G64520.1"/>
<dbReference type="ProteomicsDB" id="226351"/>
<dbReference type="DNASU" id="842760"/>
<dbReference type="EnsemblPlants" id="AT1G64520.1">
    <property type="protein sequence ID" value="AT1G64520.1"/>
    <property type="gene ID" value="AT1G64520"/>
</dbReference>
<dbReference type="GeneID" id="842760"/>
<dbReference type="Gramene" id="AT1G64520.1">
    <property type="protein sequence ID" value="AT1G64520.1"/>
    <property type="gene ID" value="AT1G64520"/>
</dbReference>
<dbReference type="KEGG" id="ath:AT1G64520"/>
<dbReference type="Araport" id="AT1G64520"/>
<dbReference type="TAIR" id="AT1G64520">
    <property type="gene designation" value="RPN12A"/>
</dbReference>
<dbReference type="eggNOG" id="KOG3151">
    <property type="taxonomic scope" value="Eukaryota"/>
</dbReference>
<dbReference type="HOGENOM" id="CLU_046003_0_0_1"/>
<dbReference type="InParanoid" id="Q9SGW3"/>
<dbReference type="OMA" id="HIMDGYF"/>
<dbReference type="OrthoDB" id="1062475at2759"/>
<dbReference type="PhylomeDB" id="Q9SGW3"/>
<dbReference type="PRO" id="PR:Q9SGW3"/>
<dbReference type="Proteomes" id="UP000006548">
    <property type="component" value="Chromosome 1"/>
</dbReference>
<dbReference type="ExpressionAtlas" id="Q9SGW3">
    <property type="expression patterns" value="baseline and differential"/>
</dbReference>
<dbReference type="GO" id="GO:0009941">
    <property type="term" value="C:chloroplast envelope"/>
    <property type="evidence" value="ECO:0007005"/>
    <property type="project" value="TAIR"/>
</dbReference>
<dbReference type="GO" id="GO:0005634">
    <property type="term" value="C:nucleus"/>
    <property type="evidence" value="ECO:0007005"/>
    <property type="project" value="TAIR"/>
</dbReference>
<dbReference type="GO" id="GO:0000502">
    <property type="term" value="C:proteasome complex"/>
    <property type="evidence" value="ECO:0000314"/>
    <property type="project" value="TAIR"/>
</dbReference>
<dbReference type="GO" id="GO:0005838">
    <property type="term" value="C:proteasome regulatory particle"/>
    <property type="evidence" value="ECO:0007669"/>
    <property type="project" value="InterPro"/>
</dbReference>
<dbReference type="GO" id="GO:0048825">
    <property type="term" value="P:cotyledon development"/>
    <property type="evidence" value="ECO:0000315"/>
    <property type="project" value="TAIR"/>
</dbReference>
<dbReference type="GO" id="GO:0009736">
    <property type="term" value="P:cytokinin-activated signaling pathway"/>
    <property type="evidence" value="ECO:0007669"/>
    <property type="project" value="UniProtKB-KW"/>
</dbReference>
<dbReference type="GO" id="GO:0009908">
    <property type="term" value="P:flower development"/>
    <property type="evidence" value="ECO:0000315"/>
    <property type="project" value="TAIR"/>
</dbReference>
<dbReference type="GO" id="GO:0048366">
    <property type="term" value="P:leaf development"/>
    <property type="evidence" value="ECO:0000315"/>
    <property type="project" value="TAIR"/>
</dbReference>
<dbReference type="GO" id="GO:0048528">
    <property type="term" value="P:post-embryonic root development"/>
    <property type="evidence" value="ECO:0000315"/>
    <property type="project" value="TAIR"/>
</dbReference>
<dbReference type="GO" id="GO:0043248">
    <property type="term" value="P:proteasome assembly"/>
    <property type="evidence" value="ECO:0000315"/>
    <property type="project" value="TAIR"/>
</dbReference>
<dbReference type="GO" id="GO:0043161">
    <property type="term" value="P:proteasome-mediated ubiquitin-dependent protein catabolic process"/>
    <property type="evidence" value="ECO:0000315"/>
    <property type="project" value="TAIR"/>
</dbReference>
<dbReference type="GO" id="GO:0030163">
    <property type="term" value="P:protein catabolic process"/>
    <property type="evidence" value="ECO:0000304"/>
    <property type="project" value="TAIR"/>
</dbReference>
<dbReference type="GO" id="GO:0031540">
    <property type="term" value="P:regulation of anthocyanin biosynthetic process"/>
    <property type="evidence" value="ECO:0000315"/>
    <property type="project" value="TAIR"/>
</dbReference>
<dbReference type="GO" id="GO:0009733">
    <property type="term" value="P:response to auxin"/>
    <property type="evidence" value="ECO:0000315"/>
    <property type="project" value="TAIR"/>
</dbReference>
<dbReference type="GO" id="GO:0009735">
    <property type="term" value="P:response to cytokinin"/>
    <property type="evidence" value="ECO:0000315"/>
    <property type="project" value="TAIR"/>
</dbReference>
<dbReference type="GO" id="GO:0009408">
    <property type="term" value="P:response to heat"/>
    <property type="evidence" value="ECO:0000315"/>
    <property type="project" value="TAIR"/>
</dbReference>
<dbReference type="GO" id="GO:0051788">
    <property type="term" value="P:response to misfolded protein"/>
    <property type="evidence" value="ECO:0000315"/>
    <property type="project" value="TAIR"/>
</dbReference>
<dbReference type="GO" id="GO:0009647">
    <property type="term" value="P:skotomorphogenesis"/>
    <property type="evidence" value="ECO:0000315"/>
    <property type="project" value="TAIR"/>
</dbReference>
<dbReference type="FunFam" id="1.25.40.990:FF:000001">
    <property type="entry name" value="26S proteasome non-ATPase regulatory subunit"/>
    <property type="match status" value="1"/>
</dbReference>
<dbReference type="Gene3D" id="1.25.40.990">
    <property type="match status" value="1"/>
</dbReference>
<dbReference type="InterPro" id="IPR006746">
    <property type="entry name" value="26S_Psome_Rpn12"/>
</dbReference>
<dbReference type="InterPro" id="IPR033464">
    <property type="entry name" value="CSN8_PSD8_EIF3K"/>
</dbReference>
<dbReference type="InterPro" id="IPR000717">
    <property type="entry name" value="PCI_dom"/>
</dbReference>
<dbReference type="PANTHER" id="PTHR12387">
    <property type="entry name" value="26S PROTEASOME NON-ATPASE REGULATORY SUBUNIT 8"/>
    <property type="match status" value="1"/>
</dbReference>
<dbReference type="PANTHER" id="PTHR12387:SF0">
    <property type="entry name" value="26S PROTEASOME NON-ATPASE REGULATORY SUBUNIT 8"/>
    <property type="match status" value="1"/>
</dbReference>
<dbReference type="Pfam" id="PF10075">
    <property type="entry name" value="CSN8_PSD8_EIF3K"/>
    <property type="match status" value="1"/>
</dbReference>
<dbReference type="PROSITE" id="PS50250">
    <property type="entry name" value="PCI"/>
    <property type="match status" value="1"/>
</dbReference>
<evidence type="ECO:0000255" key="1">
    <source>
        <dbReference type="PROSITE-ProRule" id="PRU01185"/>
    </source>
</evidence>
<evidence type="ECO:0000269" key="2">
    <source>
    </source>
</evidence>
<evidence type="ECO:0000269" key="3">
    <source>
    </source>
</evidence>
<evidence type="ECO:0000269" key="4">
    <source>
    </source>
</evidence>
<evidence type="ECO:0000269" key="5">
    <source>
    </source>
</evidence>
<evidence type="ECO:0000269" key="6">
    <source>
    </source>
</evidence>
<evidence type="ECO:0000269" key="7">
    <source>
    </source>
</evidence>
<evidence type="ECO:0000269" key="8">
    <source>
    </source>
</evidence>
<evidence type="ECO:0000269" key="9">
    <source>
    </source>
</evidence>
<evidence type="ECO:0000269" key="10">
    <source>
    </source>
</evidence>
<evidence type="ECO:0000303" key="11">
    <source>
    </source>
</evidence>
<evidence type="ECO:0000305" key="12"/>
<evidence type="ECO:0000312" key="13">
    <source>
        <dbReference type="Araport" id="AT1G64520"/>
    </source>
</evidence>
<evidence type="ECO:0000312" key="14">
    <source>
        <dbReference type="EMBL" id="AAF19671.1"/>
    </source>
</evidence>
<evidence type="ECO:0007744" key="15">
    <source>
    </source>
</evidence>
<keyword id="KW-0007">Acetylation</keyword>
<keyword id="KW-0932">Cytokinin signaling pathway</keyword>
<keyword id="KW-0647">Proteasome</keyword>
<keyword id="KW-1185">Reference proteome</keyword>
<keyword id="KW-0832">Ubl conjugation</keyword>
<name>PSD8A_ARATH</name>
<comment type="function">
    <text evidence="2 4 6 8">Acts as a regulatory subunit of the 26S proteasome which is involved in the ATP-dependent degradation of ubiquitinated proteins. May help to control the degradation of one or more factors that repress cytokinin signaling. Plays an important role for balancing cell expansion with cell proliferation rates during shoot development.</text>
</comment>
<comment type="subunit">
    <text evidence="2 3 5 7 9 10">Component of the 19S regulatory particle (RP/PA700) lid subcomplex of the 26S proteasome. The 26S proteasome is composed of a core protease (CP), known as the 20S proteasome, capped at one or both ends by the 19S regulatory particle (RP/PA700). The RP/PA700 complex is composed of at least 17 different subunits in two subcomplexes, the base and the lid, which form the portions proximal and distal to the 20S proteolytic core, respectively. Interacts with PUB22 and PUB23. Binds to the translation initiation factors TIF3E1 (PubMed:19704582). Interacts with UCH1 and UCH2 (PubMed:22951400).</text>
</comment>
<comment type="interaction">
    <interactant intactId="EBI-594133">
        <id>Q9SGW3</id>
    </interactant>
    <interactant intactId="EBI-530486">
        <id>P46639</id>
        <label>KNAT1</label>
    </interactant>
    <organismsDiffer>false</organismsDiffer>
    <experiments>3</experiments>
</comment>
<comment type="interaction">
    <interactant intactId="EBI-594133">
        <id>Q9SGW3</id>
    </interactant>
    <interactant intactId="EBI-15192297">
        <id>Q9LQF0</id>
        <label>TCP23</label>
    </interactant>
    <organismsDiffer>false</organismsDiffer>
    <experiments>3</experiments>
</comment>
<comment type="tissue specificity">
    <text evidence="3">Ubiquitous with highest expression in flowers.</text>
</comment>
<comment type="induction">
    <text evidence="2">By cytokinins.</text>
</comment>
<comment type="PTM">
    <text evidence="5">Ubiquitinated by PUB22 and PUB23.</text>
</comment>
<comment type="disruption phenotype">
    <text evidence="2 4 6">Decreased rate of leaf formation, reduced root elongation, delayed skotomorphogenesis and altered growth responses to exogenous cytokinins. Increased sensitivity to heat shock and increased tolerance to oxidative stress. Decreased 26S proteasome accumulation. In flowers and cotyledons, epidermal cells were larger than those in the wild type.</text>
</comment>
<comment type="similarity">
    <text evidence="12">Belongs to the proteasome subunit S14 family.</text>
</comment>
<reference key="1">
    <citation type="journal article" date="2004" name="J. Biol. Chem.">
        <title>Purification of the Arabidopsis 26 S proteasome: biochemical and molecular analyses revealed the presence of multiple isoforms.</title>
        <authorList>
            <person name="Yang P."/>
            <person name="Fu H."/>
            <person name="Walker J."/>
            <person name="Papa C.M."/>
            <person name="Smalle J."/>
            <person name="Ju Y.-M."/>
            <person name="Vierstra R.D."/>
        </authorList>
    </citation>
    <scope>NUCLEOTIDE SEQUENCE [MRNA]</scope>
    <scope>SUBUNIT</scope>
    <scope>IDENTIFICATION BY MASS SPECTROMETRY</scope>
    <scope>TISSUE SPECIFICITY</scope>
    <source>
        <strain>cv. Columbia</strain>
    </source>
</reference>
<reference key="2">
    <citation type="journal article" date="2000" name="Nature">
        <title>Sequence and analysis of chromosome 1 of the plant Arabidopsis thaliana.</title>
        <authorList>
            <person name="Theologis A."/>
            <person name="Ecker J.R."/>
            <person name="Palm C.J."/>
            <person name="Federspiel N.A."/>
            <person name="Kaul S."/>
            <person name="White O."/>
            <person name="Alonso J."/>
            <person name="Altafi H."/>
            <person name="Araujo R."/>
            <person name="Bowman C.L."/>
            <person name="Brooks S.Y."/>
            <person name="Buehler E."/>
            <person name="Chan A."/>
            <person name="Chao Q."/>
            <person name="Chen H."/>
            <person name="Cheuk R.F."/>
            <person name="Chin C.W."/>
            <person name="Chung M.K."/>
            <person name="Conn L."/>
            <person name="Conway A.B."/>
            <person name="Conway A.R."/>
            <person name="Creasy T.H."/>
            <person name="Dewar K."/>
            <person name="Dunn P."/>
            <person name="Etgu P."/>
            <person name="Feldblyum T.V."/>
            <person name="Feng J.-D."/>
            <person name="Fong B."/>
            <person name="Fujii C.Y."/>
            <person name="Gill J.E."/>
            <person name="Goldsmith A.D."/>
            <person name="Haas B."/>
            <person name="Hansen N.F."/>
            <person name="Hughes B."/>
            <person name="Huizar L."/>
            <person name="Hunter J.L."/>
            <person name="Jenkins J."/>
            <person name="Johnson-Hopson C."/>
            <person name="Khan S."/>
            <person name="Khaykin E."/>
            <person name="Kim C.J."/>
            <person name="Koo H.L."/>
            <person name="Kremenetskaia I."/>
            <person name="Kurtz D.B."/>
            <person name="Kwan A."/>
            <person name="Lam B."/>
            <person name="Langin-Hooper S."/>
            <person name="Lee A."/>
            <person name="Lee J.M."/>
            <person name="Lenz C.A."/>
            <person name="Li J.H."/>
            <person name="Li Y.-P."/>
            <person name="Lin X."/>
            <person name="Liu S.X."/>
            <person name="Liu Z.A."/>
            <person name="Luros J.S."/>
            <person name="Maiti R."/>
            <person name="Marziali A."/>
            <person name="Militscher J."/>
            <person name="Miranda M."/>
            <person name="Nguyen M."/>
            <person name="Nierman W.C."/>
            <person name="Osborne B.I."/>
            <person name="Pai G."/>
            <person name="Peterson J."/>
            <person name="Pham P.K."/>
            <person name="Rizzo M."/>
            <person name="Rooney T."/>
            <person name="Rowley D."/>
            <person name="Sakano H."/>
            <person name="Salzberg S.L."/>
            <person name="Schwartz J.R."/>
            <person name="Shinn P."/>
            <person name="Southwick A.M."/>
            <person name="Sun H."/>
            <person name="Tallon L.J."/>
            <person name="Tambunga G."/>
            <person name="Toriumi M.J."/>
            <person name="Town C.D."/>
            <person name="Utterback T."/>
            <person name="Van Aken S."/>
            <person name="Vaysberg M."/>
            <person name="Vysotskaia V.S."/>
            <person name="Walker M."/>
            <person name="Wu D."/>
            <person name="Yu G."/>
            <person name="Fraser C.M."/>
            <person name="Venter J.C."/>
            <person name="Davis R.W."/>
        </authorList>
    </citation>
    <scope>NUCLEOTIDE SEQUENCE [LARGE SCALE GENOMIC DNA]</scope>
    <source>
        <strain>cv. Columbia</strain>
    </source>
</reference>
<reference key="3">
    <citation type="journal article" date="2017" name="Plant J.">
        <title>Araport11: a complete reannotation of the Arabidopsis thaliana reference genome.</title>
        <authorList>
            <person name="Cheng C.Y."/>
            <person name="Krishnakumar V."/>
            <person name="Chan A.P."/>
            <person name="Thibaud-Nissen F."/>
            <person name="Schobel S."/>
            <person name="Town C.D."/>
        </authorList>
    </citation>
    <scope>GENOME REANNOTATION</scope>
    <source>
        <strain>cv. Columbia</strain>
    </source>
</reference>
<reference key="4">
    <citation type="journal article" date="2003" name="Science">
        <title>Empirical analysis of transcriptional activity in the Arabidopsis genome.</title>
        <authorList>
            <person name="Yamada K."/>
            <person name="Lim J."/>
            <person name="Dale J.M."/>
            <person name="Chen H."/>
            <person name="Shinn P."/>
            <person name="Palm C.J."/>
            <person name="Southwick A.M."/>
            <person name="Wu H.C."/>
            <person name="Kim C.J."/>
            <person name="Nguyen M."/>
            <person name="Pham P.K."/>
            <person name="Cheuk R.F."/>
            <person name="Karlin-Newmann G."/>
            <person name="Liu S.X."/>
            <person name="Lam B."/>
            <person name="Sakano H."/>
            <person name="Wu T."/>
            <person name="Yu G."/>
            <person name="Miranda M."/>
            <person name="Quach H.L."/>
            <person name="Tripp M."/>
            <person name="Chang C.H."/>
            <person name="Lee J.M."/>
            <person name="Toriumi M.J."/>
            <person name="Chan M.M."/>
            <person name="Tang C.C."/>
            <person name="Onodera C.S."/>
            <person name="Deng J.M."/>
            <person name="Akiyama K."/>
            <person name="Ansari Y."/>
            <person name="Arakawa T."/>
            <person name="Banh J."/>
            <person name="Banno F."/>
            <person name="Bowser L."/>
            <person name="Brooks S.Y."/>
            <person name="Carninci P."/>
            <person name="Chao Q."/>
            <person name="Choy N."/>
            <person name="Enju A."/>
            <person name="Goldsmith A.D."/>
            <person name="Gurjal M."/>
            <person name="Hansen N.F."/>
            <person name="Hayashizaki Y."/>
            <person name="Johnson-Hopson C."/>
            <person name="Hsuan V.W."/>
            <person name="Iida K."/>
            <person name="Karnes M."/>
            <person name="Khan S."/>
            <person name="Koesema E."/>
            <person name="Ishida J."/>
            <person name="Jiang P.X."/>
            <person name="Jones T."/>
            <person name="Kawai J."/>
            <person name="Kamiya A."/>
            <person name="Meyers C."/>
            <person name="Nakajima M."/>
            <person name="Narusaka M."/>
            <person name="Seki M."/>
            <person name="Sakurai T."/>
            <person name="Satou M."/>
            <person name="Tamse R."/>
            <person name="Vaysberg M."/>
            <person name="Wallender E.K."/>
            <person name="Wong C."/>
            <person name="Yamamura Y."/>
            <person name="Yuan S."/>
            <person name="Shinozaki K."/>
            <person name="Davis R.W."/>
            <person name="Theologis A."/>
            <person name="Ecker J.R."/>
        </authorList>
    </citation>
    <scope>NUCLEOTIDE SEQUENCE [LARGE SCALE MRNA]</scope>
    <source>
        <strain>cv. Columbia</strain>
    </source>
</reference>
<reference key="5">
    <citation type="journal article" date="2002" name="Plant Cell">
        <title>Cytokinin growth responses in Arabidopsis involve the 26S proteasome subunit RPN12.</title>
        <authorList>
            <person name="Smalle J."/>
            <person name="Kurepa J."/>
            <person name="Yang P."/>
            <person name="Babiychuk E."/>
            <person name="Kushnir S."/>
            <person name="Durski A."/>
            <person name="Vierstra R.D."/>
        </authorList>
    </citation>
    <scope>FUNCTION</scope>
    <scope>IDENTIFICATION IN THE 26S PROTEASOME</scope>
    <scope>INDUCTION</scope>
    <scope>DISRUPTION PHENOTYPE</scope>
</reference>
<reference key="6">
    <citation type="journal article" date="2008" name="Plant Cell">
        <title>Arabidopsis PUB22 and PUB23 are homologous U-Box E3 ubiquitin ligases that play combinatory roles in response to drought stress.</title>
        <authorList>
            <person name="Cho S.K."/>
            <person name="Ryu M.Y."/>
            <person name="Song C."/>
            <person name="Kwak J.M."/>
            <person name="Kim W.T."/>
        </authorList>
    </citation>
    <scope>INTERACTION WITH PUB22 AND PUB23</scope>
    <scope>UBIQUITINATION</scope>
</reference>
<reference key="7">
    <citation type="journal article" date="2008" name="Plant J.">
        <title>26S proteasome regulatory particle mutants have increased oxidative stress tolerance.</title>
        <authorList>
            <person name="Kurepa J."/>
            <person name="Toh-E A."/>
            <person name="Smalle J.A."/>
        </authorList>
    </citation>
    <scope>FUNCTION</scope>
    <scope>DISRUPTION PHENOTYPE</scope>
</reference>
<reference key="8">
    <citation type="journal article" date="2008" name="Plant Signal. Behav.">
        <title>Arabidopsis eIF3e interacts with subunits of the ribosome, Cop9 signalosome and proteasome.</title>
        <authorList>
            <person name="Paz-Aviram T."/>
            <person name="Yahalom A."/>
            <person name="Chamovitz D.A."/>
        </authorList>
    </citation>
    <scope>INTERACTION WITH TIF3E1</scope>
</reference>
<reference key="9">
    <citation type="journal article" date="2009" name="Mol. Cells">
        <title>RNAi suppression of RPN12a decreases the expression of type-A ARRs, negative regulators of cytokinin signaling pathway, in Arabidopsis.</title>
        <authorList>
            <person name="Ryu M.Y."/>
            <person name="Cho S.K."/>
            <person name="Kim W.T."/>
        </authorList>
    </citation>
    <scope>FUNCTION</scope>
</reference>
<reference key="10">
    <citation type="journal article" date="2009" name="Plant Physiol.">
        <title>Loss of 26S proteasome function leads to increased cell size and decreased cell number in Arabidopsis shoot organs.</title>
        <authorList>
            <person name="Kurepa J."/>
            <person name="Wang S."/>
            <person name="Li Y."/>
            <person name="Zaitlin D."/>
            <person name="Pierce A.J."/>
            <person name="Smalle J.A."/>
        </authorList>
    </citation>
    <scope>DISRUPTION PHENOTYPE</scope>
    <scope>FUNCTION</scope>
</reference>
<reference key="11">
    <citation type="journal article" date="2010" name="J. Biol. Chem.">
        <title>Affinity purification of the Arabidopsis 26 S proteasome reveals a diverse array of plant proteolytic complexes.</title>
        <authorList>
            <person name="Book A.J."/>
            <person name="Gladman N.P."/>
            <person name="Lee S.S."/>
            <person name="Scalf M."/>
            <person name="Smith L.M."/>
            <person name="Vierstra R.D."/>
        </authorList>
    </citation>
    <scope>IDENTIFICATION BY MASS SPECTROMETRY</scope>
    <scope>CHARACTERIZATION OF THE 26S PROTEASOME COMPLEX</scope>
    <scope>SUBUNIT</scope>
    <scope>ACETYLATION AT MET-1</scope>
</reference>
<reference key="12">
    <citation type="journal article" date="2012" name="Mol. Cell. Proteomics">
        <title>Comparative large-scale characterisation of plant vs. mammal proteins reveals similar and idiosyncratic N-alpha acetylation features.</title>
        <authorList>
            <person name="Bienvenut W.V."/>
            <person name="Sumpton D."/>
            <person name="Martinez A."/>
            <person name="Lilla S."/>
            <person name="Espagne C."/>
            <person name="Meinnel T."/>
            <person name="Giglione C."/>
        </authorList>
    </citation>
    <scope>ACETYLATION [LARGE SCALE ANALYSIS] AT MET-1</scope>
    <scope>IDENTIFICATION BY MASS SPECTROMETRY [LARGE SCALE ANALYSIS]</scope>
</reference>
<reference key="13">
    <citation type="journal article" date="2012" name="Plant Signal. Behav.">
        <title>Evidence that the Arabidopsis Ubiquitin C-terminal Hydrolases 1 and 2 associate with the 26S proteasome and the TREX-2 complex.</title>
        <authorList>
            <person name="Tian G."/>
            <person name="Lu Q."/>
            <person name="Kohalmi S.E."/>
            <person name="Rothstein S.J."/>
            <person name="Cui Y."/>
        </authorList>
    </citation>
    <scope>INTERACTION WITH UCH1 AND UCH2</scope>
</reference>
<proteinExistence type="evidence at protein level"/>
<feature type="chain" id="PRO_0000397122" description="26S proteasome non-ATPase regulatory subunit 8 homolog A">
    <location>
        <begin position="1"/>
        <end position="267"/>
    </location>
</feature>
<feature type="domain" description="PCI" evidence="1">
    <location>
        <begin position="79"/>
        <end position="251"/>
    </location>
</feature>
<feature type="modified residue" description="N-acetylmethionine" evidence="9 15">
    <location>
        <position position="1"/>
    </location>
</feature>
<feature type="sequence conflict" description="In Ref. 1; AAP86674." evidence="12" ref="1">
    <original>T</original>
    <variation>P</variation>
    <location>
        <position position="182"/>
    </location>
</feature>
<gene>
    <name evidence="11" type="primary">RPN12A</name>
    <name evidence="13" type="ordered locus">At1g64520</name>
    <name evidence="14" type="ORF">F1N19.9</name>
</gene>
<sequence length="267" mass="30706">MDPQLTEVSQQFERFKAAFARKDYNTCSDLLSQLKVLLTKFTSLPPLFENSPNAAKELTIARDIYEHAVVLSVKTEDQDAFERDFFQLKPYYVDARNRIPQSPQENLILGLNLLRLLVQNRIAEFHTELELLSSATLEDPCIKHAVELEQSFMEGAYNRVLSARQTAPDATYVYFMDLLAKTIRDEIAGCSEKAYDYVSISDARQMLLFSSDQELLTYVTDEHPEWEVKEGFVVFQKAKETAPCKEIPSLQLINQTLSYARELERIV</sequence>